<organismHost>
    <name type="scientific">Helicoverpa zea</name>
    <name type="common">Corn earworm moth</name>
    <name type="synonym">Heliothis zea</name>
    <dbReference type="NCBI Taxonomy" id="7113"/>
</organismHost>
<organismHost>
    <name type="scientific">Lepidoptera</name>
    <name type="common">butterflies and moths</name>
    <dbReference type="NCBI Taxonomy" id="7088"/>
</organismHost>
<organismHost>
    <name type="scientific">Ostrinia nubilalis</name>
    <name type="common">European corn borer</name>
    <name type="synonym">Pyralis nubilalis</name>
    <dbReference type="NCBI Taxonomy" id="29057"/>
</organismHost>
<reference key="1">
    <citation type="journal article" date="2003" name="J. Gen. Virol.">
        <title>Comparative analysis of the genomes of Rachiplusia ou and Autographa californica multiple nucleopolyhedroviruses.</title>
        <authorList>
            <person name="Harrison R.L."/>
            <person name="Bonning B.C."/>
        </authorList>
    </citation>
    <scope>NUCLEOTIDE SEQUENCE [GENOMIC DNA]</scope>
</reference>
<feature type="chain" id="PRO_0000132841" description="Late expression factor 11">
    <location>
        <begin position="1"/>
        <end position="112"/>
    </location>
</feature>
<proteinExistence type="inferred from homology"/>
<accession>Q8B9L3</accession>
<keyword id="KW-1185">Reference proteome</keyword>
<keyword id="KW-0804">Transcription</keyword>
<keyword id="KW-0805">Transcription regulation</keyword>
<organism>
    <name type="scientific">Rachiplusia ou multiple nucleopolyhedrovirus (strain R1)</name>
    <name type="common">RoMNPV</name>
    <dbReference type="NCBI Taxonomy" id="654904"/>
    <lineage>
        <taxon>Viruses</taxon>
        <taxon>Viruses incertae sedis</taxon>
        <taxon>Naldaviricetes</taxon>
        <taxon>Lefavirales</taxon>
        <taxon>Baculoviridae</taxon>
        <taxon>Alphabaculovirus</taxon>
        <taxon>Alphabaculovirus raous</taxon>
    </lineage>
</organism>
<evidence type="ECO:0000250" key="1"/>
<evidence type="ECO:0000305" key="2"/>
<dbReference type="EMBL" id="AY145471">
    <property type="protein sequence ID" value="AAN28128.1"/>
    <property type="molecule type" value="Genomic_DNA"/>
</dbReference>
<dbReference type="Proteomes" id="UP000007020">
    <property type="component" value="Segment"/>
</dbReference>
<dbReference type="GO" id="GO:0006355">
    <property type="term" value="P:regulation of DNA-templated transcription"/>
    <property type="evidence" value="ECO:0007669"/>
    <property type="project" value="InterPro"/>
</dbReference>
<dbReference type="GO" id="GO:0019058">
    <property type="term" value="P:viral life cycle"/>
    <property type="evidence" value="ECO:0007669"/>
    <property type="project" value="InterPro"/>
</dbReference>
<dbReference type="InterPro" id="IPR009429">
    <property type="entry name" value="Baculo_LEF-11"/>
</dbReference>
<dbReference type="Pfam" id="PF06385">
    <property type="entry name" value="Baculo_LEF-11"/>
    <property type="match status" value="1"/>
</dbReference>
<comment type="function">
    <text evidence="1">Involved in late/very late gene activation.</text>
</comment>
<comment type="similarity">
    <text evidence="2">Belongs to the baculoviridae LEF-11 family.</text>
</comment>
<protein>
    <recommendedName>
        <fullName>Late expression factor 11</fullName>
    </recommendedName>
</protein>
<gene>
    <name type="primary">LEF-11</name>
</gene>
<name>LEF11_NPVR1</name>
<sequence length="112" mass="13261">MLPKNCTHLGECNSDCLTRSEIQALFREVINTLKHTMNTENVCAHMLDIVSFERIKEYIRANLGHYTVITDKCSKRKVCLHHKRIARLLGIKKIYHQEYKRVVSKVYKKQTW</sequence>